<reference key="1">
    <citation type="journal article" date="2016" name="Front. Microbiol.">
        <title>The complete genome sequence of hyperthermophile Dictyoglomus turgidum DSM 6724 reveals a specialized carbohydrate fermentor.</title>
        <authorList>
            <person name="Brumm P.J."/>
            <person name="Gowda K."/>
            <person name="Robb F.T."/>
            <person name="Mead D.A."/>
        </authorList>
    </citation>
    <scope>NUCLEOTIDE SEQUENCE [LARGE SCALE GENOMIC DNA]</scope>
    <source>
        <strain>DSM 6724 / Z-1310</strain>
    </source>
</reference>
<sequence length="97" mass="11701">MRKYEIMCLISPELSEEDFKTLYEGIQQDIQNLGGEVQNVDVWGKRTLAYPVKKFTEGYYVVMNFLFPQTQLPEFERRLKLREKLLRYMITLLEKEE</sequence>
<dbReference type="EMBL" id="CP001251">
    <property type="protein sequence ID" value="ACK42637.1"/>
    <property type="molecule type" value="Genomic_DNA"/>
</dbReference>
<dbReference type="RefSeq" id="WP_012583717.1">
    <property type="nucleotide sequence ID" value="NC_011661.1"/>
</dbReference>
<dbReference type="RefSeq" id="YP_002353251.1">
    <property type="nucleotide sequence ID" value="NC_011661.1"/>
</dbReference>
<dbReference type="SMR" id="B8E0J2"/>
<dbReference type="FunCoup" id="B8E0J2">
    <property type="interactions" value="349"/>
</dbReference>
<dbReference type="STRING" id="515635.Dtur_1363"/>
<dbReference type="EnsemblBacteria" id="ACK42637">
    <property type="protein sequence ID" value="ACK42637"/>
    <property type="gene ID" value="Dtur_1363"/>
</dbReference>
<dbReference type="KEGG" id="dtu:Dtur_1363"/>
<dbReference type="eggNOG" id="COG0360">
    <property type="taxonomic scope" value="Bacteria"/>
</dbReference>
<dbReference type="HOGENOM" id="CLU_113441_5_1_0"/>
<dbReference type="InParanoid" id="B8E0J2"/>
<dbReference type="OrthoDB" id="9812702at2"/>
<dbReference type="Proteomes" id="UP000007719">
    <property type="component" value="Chromosome"/>
</dbReference>
<dbReference type="GO" id="GO:0005737">
    <property type="term" value="C:cytoplasm"/>
    <property type="evidence" value="ECO:0007669"/>
    <property type="project" value="UniProtKB-ARBA"/>
</dbReference>
<dbReference type="GO" id="GO:1990904">
    <property type="term" value="C:ribonucleoprotein complex"/>
    <property type="evidence" value="ECO:0007669"/>
    <property type="project" value="UniProtKB-KW"/>
</dbReference>
<dbReference type="GO" id="GO:0005840">
    <property type="term" value="C:ribosome"/>
    <property type="evidence" value="ECO:0007669"/>
    <property type="project" value="UniProtKB-KW"/>
</dbReference>
<dbReference type="GO" id="GO:0070181">
    <property type="term" value="F:small ribosomal subunit rRNA binding"/>
    <property type="evidence" value="ECO:0000318"/>
    <property type="project" value="GO_Central"/>
</dbReference>
<dbReference type="GO" id="GO:0003735">
    <property type="term" value="F:structural constituent of ribosome"/>
    <property type="evidence" value="ECO:0000318"/>
    <property type="project" value="GO_Central"/>
</dbReference>
<dbReference type="GO" id="GO:0006412">
    <property type="term" value="P:translation"/>
    <property type="evidence" value="ECO:0007669"/>
    <property type="project" value="UniProtKB-UniRule"/>
</dbReference>
<dbReference type="CDD" id="cd00473">
    <property type="entry name" value="bS6"/>
    <property type="match status" value="1"/>
</dbReference>
<dbReference type="FunFam" id="3.30.70.60:FF:000002">
    <property type="entry name" value="30S ribosomal protein S6"/>
    <property type="match status" value="1"/>
</dbReference>
<dbReference type="Gene3D" id="3.30.70.60">
    <property type="match status" value="1"/>
</dbReference>
<dbReference type="HAMAP" id="MF_00360">
    <property type="entry name" value="Ribosomal_bS6"/>
    <property type="match status" value="1"/>
</dbReference>
<dbReference type="InterPro" id="IPR000529">
    <property type="entry name" value="Ribosomal_bS6"/>
</dbReference>
<dbReference type="InterPro" id="IPR035980">
    <property type="entry name" value="Ribosomal_bS6_sf"/>
</dbReference>
<dbReference type="InterPro" id="IPR020814">
    <property type="entry name" value="Ribosomal_S6_plastid/chlpt"/>
</dbReference>
<dbReference type="InterPro" id="IPR014717">
    <property type="entry name" value="Transl_elong_EF1B/ribsomal_bS6"/>
</dbReference>
<dbReference type="NCBIfam" id="TIGR00166">
    <property type="entry name" value="S6"/>
    <property type="match status" value="1"/>
</dbReference>
<dbReference type="PANTHER" id="PTHR21011">
    <property type="entry name" value="MITOCHONDRIAL 28S RIBOSOMAL PROTEIN S6"/>
    <property type="match status" value="1"/>
</dbReference>
<dbReference type="PANTHER" id="PTHR21011:SF1">
    <property type="entry name" value="SMALL RIBOSOMAL SUBUNIT PROTEIN BS6M"/>
    <property type="match status" value="1"/>
</dbReference>
<dbReference type="Pfam" id="PF01250">
    <property type="entry name" value="Ribosomal_S6"/>
    <property type="match status" value="1"/>
</dbReference>
<dbReference type="SUPFAM" id="SSF54995">
    <property type="entry name" value="Ribosomal protein S6"/>
    <property type="match status" value="1"/>
</dbReference>
<accession>B8E0J2</accession>
<feature type="chain" id="PRO_1000120742" description="Small ribosomal subunit protein bS6">
    <location>
        <begin position="1"/>
        <end position="97"/>
    </location>
</feature>
<keyword id="KW-1185">Reference proteome</keyword>
<keyword id="KW-0687">Ribonucleoprotein</keyword>
<keyword id="KW-0689">Ribosomal protein</keyword>
<keyword id="KW-0694">RNA-binding</keyword>
<keyword id="KW-0699">rRNA-binding</keyword>
<name>RS6_DICTD</name>
<organism>
    <name type="scientific">Dictyoglomus turgidum (strain DSM 6724 / Z-1310)</name>
    <dbReference type="NCBI Taxonomy" id="515635"/>
    <lineage>
        <taxon>Bacteria</taxon>
        <taxon>Pseudomonadati</taxon>
        <taxon>Dictyoglomota</taxon>
        <taxon>Dictyoglomia</taxon>
        <taxon>Dictyoglomales</taxon>
        <taxon>Dictyoglomaceae</taxon>
        <taxon>Dictyoglomus</taxon>
    </lineage>
</organism>
<gene>
    <name evidence="1" type="primary">rpsF</name>
    <name type="ordered locus">Dtur_1363</name>
</gene>
<protein>
    <recommendedName>
        <fullName evidence="1">Small ribosomal subunit protein bS6</fullName>
    </recommendedName>
    <alternativeName>
        <fullName evidence="2">30S ribosomal protein S6</fullName>
    </alternativeName>
</protein>
<proteinExistence type="inferred from homology"/>
<evidence type="ECO:0000255" key="1">
    <source>
        <dbReference type="HAMAP-Rule" id="MF_00360"/>
    </source>
</evidence>
<evidence type="ECO:0000305" key="2"/>
<comment type="function">
    <text evidence="1">Binds together with bS18 to 16S ribosomal RNA.</text>
</comment>
<comment type="similarity">
    <text evidence="1">Belongs to the bacterial ribosomal protein bS6 family.</text>
</comment>